<reference key="1">
    <citation type="journal article" date="2006" name="Mol. Microbiol.">
        <title>Role of pathogenicity island-associated integrases in the genome plasticity of uropathogenic Escherichia coli strain 536.</title>
        <authorList>
            <person name="Hochhut B."/>
            <person name="Wilde C."/>
            <person name="Balling G."/>
            <person name="Middendorf B."/>
            <person name="Dobrindt U."/>
            <person name="Brzuszkiewicz E."/>
            <person name="Gottschalk G."/>
            <person name="Carniel E."/>
            <person name="Hacker J."/>
        </authorList>
    </citation>
    <scope>NUCLEOTIDE SEQUENCE [LARGE SCALE GENOMIC DNA]</scope>
    <source>
        <strain>536 / UPEC</strain>
    </source>
</reference>
<accession>Q0TD43</accession>
<sequence length="487" mass="52889">MKPSTEWWRYLAPLAVIAIIALIPVPAGLESHTWLYFAVFTGVIVGLILEPVPGAVVAMVGISIIAILSPWLLFSPEQLAQPGFKFTAKSLSWAVSGFSNSVIWLIFAAFMFGTGYEKTGLGRRIALILVKKMGHRTLFLGYAVMFSELILAPVTPSNSARGAGIIYPIIRNLPPLYQSQPNDSSSRSIGSYIMWMGIVADCVTSAIFLTAMAPNLLLIGLMKSASHATLSWGDWFLGMLPLSILLVLLVPWLAYVLYPPVLKSGDQVPRWAETELQAMGPLCSREKRMLGLMVGALVLWIFGGDYIDAAMVGYSVVALMLLLRIISWDDIVSNKAAWNVFFWLASLITLATGLNNTGFISWFGKLLAGSLSGYSPTIVMVALIVVFYLLRYFFASATAYTSALAPMMIAAALAMPEIPLPVFCLMVGAAIGLGSILTPYATGPSPIYYGSGYLPTVDYWRLGAIFGLIFLVLLVITGLLWMPVVLL</sequence>
<comment type="function">
    <text evidence="1">Catalyzes the uptake of tartrate in exchange for intracellular succinate. Essential for anaerobic L-tartrate fermentation.</text>
</comment>
<comment type="catalytic activity">
    <reaction evidence="1">
        <text>(2R,3R)-tartrate(out) + succinate(in) = (2R,3R)-tartrate(in) + succinate(out)</text>
        <dbReference type="Rhea" id="RHEA:29259"/>
        <dbReference type="ChEBI" id="CHEBI:30031"/>
        <dbReference type="ChEBI" id="CHEBI:30924"/>
    </reaction>
    <physiologicalReaction direction="left-to-right" evidence="1">
        <dbReference type="Rhea" id="RHEA:29260"/>
    </physiologicalReaction>
</comment>
<comment type="subcellular location">
    <subcellularLocation>
        <location evidence="1">Cell inner membrane</location>
        <topology evidence="2">Multi-pass membrane protein</topology>
    </subcellularLocation>
</comment>
<comment type="similarity">
    <text evidence="3">Belongs to the SLC13A/DASS transporter (TC 2.A.47) family. DIT1 subfamily.</text>
</comment>
<gene>
    <name type="primary">ttdT</name>
    <name type="ordered locus">ECP_3153</name>
</gene>
<feature type="chain" id="PRO_0000262712" description="L-tartrate/succinate antiporter">
    <location>
        <begin position="1"/>
        <end position="487"/>
    </location>
</feature>
<feature type="transmembrane region" description="Helical" evidence="2">
    <location>
        <begin position="10"/>
        <end position="30"/>
    </location>
</feature>
<feature type="transmembrane region" description="Helical" evidence="2">
    <location>
        <begin position="33"/>
        <end position="53"/>
    </location>
</feature>
<feature type="transmembrane region" description="Helical" evidence="2">
    <location>
        <begin position="54"/>
        <end position="74"/>
    </location>
</feature>
<feature type="transmembrane region" description="Helical" evidence="2">
    <location>
        <begin position="93"/>
        <end position="113"/>
    </location>
</feature>
<feature type="transmembrane region" description="Helical" evidence="2">
    <location>
        <begin position="137"/>
        <end position="157"/>
    </location>
</feature>
<feature type="transmembrane region" description="Helical" evidence="2">
    <location>
        <begin position="189"/>
        <end position="209"/>
    </location>
</feature>
<feature type="transmembrane region" description="Helical" evidence="2">
    <location>
        <begin position="236"/>
        <end position="256"/>
    </location>
</feature>
<feature type="transmembrane region" description="Helical" evidence="2">
    <location>
        <begin position="292"/>
        <end position="312"/>
    </location>
</feature>
<feature type="transmembrane region" description="Helical" evidence="2">
    <location>
        <begin position="313"/>
        <end position="333"/>
    </location>
</feature>
<feature type="transmembrane region" description="Helical" evidence="2">
    <location>
        <begin position="340"/>
        <end position="360"/>
    </location>
</feature>
<feature type="transmembrane region" description="Helical" evidence="2">
    <location>
        <begin position="370"/>
        <end position="390"/>
    </location>
</feature>
<feature type="transmembrane region" description="Helical" evidence="2">
    <location>
        <begin position="393"/>
        <end position="413"/>
    </location>
</feature>
<feature type="transmembrane region" description="Helical" evidence="2">
    <location>
        <begin position="418"/>
        <end position="438"/>
    </location>
</feature>
<feature type="transmembrane region" description="Helical" evidence="2">
    <location>
        <begin position="465"/>
        <end position="485"/>
    </location>
</feature>
<name>TTDT_ECOL5</name>
<organism>
    <name type="scientific">Escherichia coli O6:K15:H31 (strain 536 / UPEC)</name>
    <dbReference type="NCBI Taxonomy" id="362663"/>
    <lineage>
        <taxon>Bacteria</taxon>
        <taxon>Pseudomonadati</taxon>
        <taxon>Pseudomonadota</taxon>
        <taxon>Gammaproteobacteria</taxon>
        <taxon>Enterobacterales</taxon>
        <taxon>Enterobacteriaceae</taxon>
        <taxon>Escherichia</taxon>
    </lineage>
</organism>
<protein>
    <recommendedName>
        <fullName evidence="1">L-tartrate/succinate antiporter</fullName>
    </recommendedName>
    <alternativeName>
        <fullName>Tartrate carrier</fullName>
    </alternativeName>
    <alternativeName>
        <fullName>Tartrate transporter</fullName>
    </alternativeName>
</protein>
<dbReference type="EMBL" id="CP000247">
    <property type="protein sequence ID" value="ABG71136.1"/>
    <property type="molecule type" value="Genomic_DNA"/>
</dbReference>
<dbReference type="RefSeq" id="WP_000804927.1">
    <property type="nucleotide sequence ID" value="NC_008253.1"/>
</dbReference>
<dbReference type="SMR" id="Q0TD43"/>
<dbReference type="KEGG" id="ecp:ECP_3153"/>
<dbReference type="HOGENOM" id="CLU_005170_7_0_6"/>
<dbReference type="Proteomes" id="UP000009182">
    <property type="component" value="Chromosome"/>
</dbReference>
<dbReference type="GO" id="GO:0005886">
    <property type="term" value="C:plasma membrane"/>
    <property type="evidence" value="ECO:0007669"/>
    <property type="project" value="UniProtKB-SubCell"/>
</dbReference>
<dbReference type="GO" id="GO:0015297">
    <property type="term" value="F:antiporter activity"/>
    <property type="evidence" value="ECO:0007669"/>
    <property type="project" value="UniProtKB-KW"/>
</dbReference>
<dbReference type="InterPro" id="IPR030676">
    <property type="entry name" value="CitT-rel"/>
</dbReference>
<dbReference type="InterPro" id="IPR001898">
    <property type="entry name" value="SLC13A/DASS"/>
</dbReference>
<dbReference type="NCBIfam" id="TIGR00785">
    <property type="entry name" value="dass"/>
    <property type="match status" value="1"/>
</dbReference>
<dbReference type="PANTHER" id="PTHR42826">
    <property type="entry name" value="DICARBOXYLATE TRANSPORTER 2.1, CHLOROPLASTIC"/>
    <property type="match status" value="1"/>
</dbReference>
<dbReference type="Pfam" id="PF00939">
    <property type="entry name" value="Na_sulph_symp"/>
    <property type="match status" value="1"/>
</dbReference>
<dbReference type="PIRSF" id="PIRSF002457">
    <property type="entry name" value="DASS"/>
    <property type="match status" value="1"/>
</dbReference>
<evidence type="ECO:0000250" key="1">
    <source>
        <dbReference type="UniProtKB" id="P39414"/>
    </source>
</evidence>
<evidence type="ECO:0000255" key="2"/>
<evidence type="ECO:0000305" key="3"/>
<keyword id="KW-0050">Antiport</keyword>
<keyword id="KW-0997">Cell inner membrane</keyword>
<keyword id="KW-1003">Cell membrane</keyword>
<keyword id="KW-0472">Membrane</keyword>
<keyword id="KW-0812">Transmembrane</keyword>
<keyword id="KW-1133">Transmembrane helix</keyword>
<keyword id="KW-0813">Transport</keyword>
<proteinExistence type="inferred from homology"/>